<keyword id="KW-1185">Reference proteome</keyword>
<keyword id="KW-0687">Ribonucleoprotein</keyword>
<keyword id="KW-0689">Ribosomal protein</keyword>
<keyword id="KW-0694">RNA-binding</keyword>
<keyword id="KW-0699">rRNA-binding</keyword>
<dbReference type="EMBL" id="CP000563">
    <property type="protein sequence ID" value="ABN62716.1"/>
    <property type="molecule type" value="Genomic_DNA"/>
</dbReference>
<dbReference type="RefSeq" id="WP_006082713.1">
    <property type="nucleotide sequence ID" value="NC_009052.1"/>
</dbReference>
<dbReference type="SMR" id="A3D7K3"/>
<dbReference type="STRING" id="325240.Sbal_3236"/>
<dbReference type="GeneID" id="11773456"/>
<dbReference type="KEGG" id="sbl:Sbal_3236"/>
<dbReference type="HOGENOM" id="CLU_148518_0_0_6"/>
<dbReference type="OrthoDB" id="9799262at2"/>
<dbReference type="Proteomes" id="UP000001557">
    <property type="component" value="Chromosome"/>
</dbReference>
<dbReference type="GO" id="GO:0022627">
    <property type="term" value="C:cytosolic small ribosomal subunit"/>
    <property type="evidence" value="ECO:0007669"/>
    <property type="project" value="TreeGrafter"/>
</dbReference>
<dbReference type="GO" id="GO:0019843">
    <property type="term" value="F:rRNA binding"/>
    <property type="evidence" value="ECO:0007669"/>
    <property type="project" value="UniProtKB-UniRule"/>
</dbReference>
<dbReference type="GO" id="GO:0003735">
    <property type="term" value="F:structural constituent of ribosome"/>
    <property type="evidence" value="ECO:0007669"/>
    <property type="project" value="InterPro"/>
</dbReference>
<dbReference type="GO" id="GO:0006412">
    <property type="term" value="P:translation"/>
    <property type="evidence" value="ECO:0007669"/>
    <property type="project" value="UniProtKB-UniRule"/>
</dbReference>
<dbReference type="CDD" id="cd00353">
    <property type="entry name" value="Ribosomal_S15p_S13e"/>
    <property type="match status" value="1"/>
</dbReference>
<dbReference type="FunFam" id="1.10.287.10:FF:000002">
    <property type="entry name" value="30S ribosomal protein S15"/>
    <property type="match status" value="1"/>
</dbReference>
<dbReference type="Gene3D" id="6.10.250.3130">
    <property type="match status" value="1"/>
</dbReference>
<dbReference type="Gene3D" id="1.10.287.10">
    <property type="entry name" value="S15/NS1, RNA-binding"/>
    <property type="match status" value="1"/>
</dbReference>
<dbReference type="HAMAP" id="MF_01343_B">
    <property type="entry name" value="Ribosomal_uS15_B"/>
    <property type="match status" value="1"/>
</dbReference>
<dbReference type="InterPro" id="IPR000589">
    <property type="entry name" value="Ribosomal_uS15"/>
</dbReference>
<dbReference type="InterPro" id="IPR005290">
    <property type="entry name" value="Ribosomal_uS15_bac-type"/>
</dbReference>
<dbReference type="InterPro" id="IPR009068">
    <property type="entry name" value="uS15_NS1_RNA-bd_sf"/>
</dbReference>
<dbReference type="NCBIfam" id="TIGR00952">
    <property type="entry name" value="S15_bact"/>
    <property type="match status" value="1"/>
</dbReference>
<dbReference type="PANTHER" id="PTHR23321">
    <property type="entry name" value="RIBOSOMAL PROTEIN S15, BACTERIAL AND ORGANELLAR"/>
    <property type="match status" value="1"/>
</dbReference>
<dbReference type="PANTHER" id="PTHR23321:SF26">
    <property type="entry name" value="SMALL RIBOSOMAL SUBUNIT PROTEIN US15M"/>
    <property type="match status" value="1"/>
</dbReference>
<dbReference type="Pfam" id="PF00312">
    <property type="entry name" value="Ribosomal_S15"/>
    <property type="match status" value="1"/>
</dbReference>
<dbReference type="SMART" id="SM01387">
    <property type="entry name" value="Ribosomal_S15"/>
    <property type="match status" value="1"/>
</dbReference>
<dbReference type="SUPFAM" id="SSF47060">
    <property type="entry name" value="S15/NS1 RNA-binding domain"/>
    <property type="match status" value="1"/>
</dbReference>
<dbReference type="PROSITE" id="PS00362">
    <property type="entry name" value="RIBOSOMAL_S15"/>
    <property type="match status" value="1"/>
</dbReference>
<comment type="function">
    <text evidence="1">One of the primary rRNA binding proteins, it binds directly to 16S rRNA where it helps nucleate assembly of the platform of the 30S subunit by binding and bridging several RNA helices of the 16S rRNA.</text>
</comment>
<comment type="function">
    <text evidence="1">Forms an intersubunit bridge (bridge B4) with the 23S rRNA of the 50S subunit in the ribosome.</text>
</comment>
<comment type="subunit">
    <text evidence="1">Part of the 30S ribosomal subunit. Forms a bridge to the 50S subunit in the 70S ribosome, contacting the 23S rRNA.</text>
</comment>
<comment type="similarity">
    <text evidence="1">Belongs to the universal ribosomal protein uS15 family.</text>
</comment>
<gene>
    <name evidence="1" type="primary">rpsO</name>
    <name type="ordered locus">Sbal_3236</name>
</gene>
<proteinExistence type="inferred from homology"/>
<accession>A3D7K3</accession>
<name>RS15_SHEB5</name>
<sequence length="89" mass="10209">MSLSTEVKAKILADFGRCENDTGSTEVQVALLTAQINHLQAHFKEHIHDHHSRRGLLRMVSSRRKLTAYLKRTDVARYTALIQKLGLRR</sequence>
<evidence type="ECO:0000255" key="1">
    <source>
        <dbReference type="HAMAP-Rule" id="MF_01343"/>
    </source>
</evidence>
<evidence type="ECO:0000305" key="2"/>
<protein>
    <recommendedName>
        <fullName evidence="1">Small ribosomal subunit protein uS15</fullName>
    </recommendedName>
    <alternativeName>
        <fullName evidence="2">30S ribosomal protein S15</fullName>
    </alternativeName>
</protein>
<reference key="1">
    <citation type="submission" date="2007-02" db="EMBL/GenBank/DDBJ databases">
        <title>Complete sequence of chromosome of Shewanella baltica OS155.</title>
        <authorList>
            <consortium name="US DOE Joint Genome Institute"/>
            <person name="Copeland A."/>
            <person name="Lucas S."/>
            <person name="Lapidus A."/>
            <person name="Barry K."/>
            <person name="Detter J.C."/>
            <person name="Glavina del Rio T."/>
            <person name="Hammon N."/>
            <person name="Israni S."/>
            <person name="Dalin E."/>
            <person name="Tice H."/>
            <person name="Pitluck S."/>
            <person name="Sims D.R."/>
            <person name="Brettin T."/>
            <person name="Bruce D."/>
            <person name="Han C."/>
            <person name="Tapia R."/>
            <person name="Brainard J."/>
            <person name="Schmutz J."/>
            <person name="Larimer F."/>
            <person name="Land M."/>
            <person name="Hauser L."/>
            <person name="Kyrpides N."/>
            <person name="Mikhailova N."/>
            <person name="Brettar I."/>
            <person name="Klappenbach J."/>
            <person name="Konstantinidis K."/>
            <person name="Rodrigues J."/>
            <person name="Tiedje J."/>
            <person name="Richardson P."/>
        </authorList>
    </citation>
    <scope>NUCLEOTIDE SEQUENCE [LARGE SCALE GENOMIC DNA]</scope>
    <source>
        <strain>OS155 / ATCC BAA-1091</strain>
    </source>
</reference>
<organism>
    <name type="scientific">Shewanella baltica (strain OS155 / ATCC BAA-1091)</name>
    <dbReference type="NCBI Taxonomy" id="325240"/>
    <lineage>
        <taxon>Bacteria</taxon>
        <taxon>Pseudomonadati</taxon>
        <taxon>Pseudomonadota</taxon>
        <taxon>Gammaproteobacteria</taxon>
        <taxon>Alteromonadales</taxon>
        <taxon>Shewanellaceae</taxon>
        <taxon>Shewanella</taxon>
    </lineage>
</organism>
<feature type="chain" id="PRO_1000054865" description="Small ribosomal subunit protein uS15">
    <location>
        <begin position="1"/>
        <end position="89"/>
    </location>
</feature>